<comment type="function">
    <text evidence="1">Could be involved in insertion of integral membrane proteins into the membrane.</text>
</comment>
<comment type="subcellular location">
    <subcellularLocation>
        <location evidence="1">Cell inner membrane</location>
        <topology evidence="1">Peripheral membrane protein</topology>
        <orientation evidence="1">Cytoplasmic side</orientation>
    </subcellularLocation>
</comment>
<comment type="similarity">
    <text evidence="1">Belongs to the UPF0161 family.</text>
</comment>
<keyword id="KW-0997">Cell inner membrane</keyword>
<keyword id="KW-1003">Cell membrane</keyword>
<keyword id="KW-0472">Membrane</keyword>
<sequence length="81" mass="9198">MRKLALVPIQFYRYAISPLMANHCRFFPSCSCYAYEAIENHGIWRGGWLAVRRLGRCHPWNDGGFDPVPPAPSSRTSSIAE</sequence>
<reference key="1">
    <citation type="submission" date="2007-05" db="EMBL/GenBank/DDBJ databases">
        <title>Complete sequence of Pseudomonas putida F1.</title>
        <authorList>
            <consortium name="US DOE Joint Genome Institute"/>
            <person name="Copeland A."/>
            <person name="Lucas S."/>
            <person name="Lapidus A."/>
            <person name="Barry K."/>
            <person name="Detter J.C."/>
            <person name="Glavina del Rio T."/>
            <person name="Hammon N."/>
            <person name="Israni S."/>
            <person name="Dalin E."/>
            <person name="Tice H."/>
            <person name="Pitluck S."/>
            <person name="Chain P."/>
            <person name="Malfatti S."/>
            <person name="Shin M."/>
            <person name="Vergez L."/>
            <person name="Schmutz J."/>
            <person name="Larimer F."/>
            <person name="Land M."/>
            <person name="Hauser L."/>
            <person name="Kyrpides N."/>
            <person name="Lykidis A."/>
            <person name="Parales R."/>
            <person name="Richardson P."/>
        </authorList>
    </citation>
    <scope>NUCLEOTIDE SEQUENCE [LARGE SCALE GENOMIC DNA]</scope>
    <source>
        <strain>ATCC 700007 / DSM 6899 / JCM 31910 / BCRC 17059 / LMG 24140 / F1</strain>
    </source>
</reference>
<evidence type="ECO:0000255" key="1">
    <source>
        <dbReference type="HAMAP-Rule" id="MF_00386"/>
    </source>
</evidence>
<evidence type="ECO:0000256" key="2">
    <source>
        <dbReference type="SAM" id="MobiDB-lite"/>
    </source>
</evidence>
<proteinExistence type="inferred from homology"/>
<gene>
    <name type="ordered locus">Pput_5310</name>
</gene>
<protein>
    <recommendedName>
        <fullName evidence="1">Putative membrane protein insertion efficiency factor</fullName>
    </recommendedName>
</protein>
<dbReference type="EMBL" id="CP000712">
    <property type="protein sequence ID" value="ABQ81428.1"/>
    <property type="molecule type" value="Genomic_DNA"/>
</dbReference>
<dbReference type="KEGG" id="ppf:Pput_5310"/>
<dbReference type="eggNOG" id="COG0759">
    <property type="taxonomic scope" value="Bacteria"/>
</dbReference>
<dbReference type="HOGENOM" id="CLU_144811_6_1_6"/>
<dbReference type="GO" id="GO:0005886">
    <property type="term" value="C:plasma membrane"/>
    <property type="evidence" value="ECO:0007669"/>
    <property type="project" value="UniProtKB-SubCell"/>
</dbReference>
<dbReference type="HAMAP" id="MF_00386">
    <property type="entry name" value="UPF0161_YidD"/>
    <property type="match status" value="1"/>
</dbReference>
<dbReference type="InterPro" id="IPR002696">
    <property type="entry name" value="Membr_insert_effic_factor_YidD"/>
</dbReference>
<dbReference type="NCBIfam" id="TIGR00278">
    <property type="entry name" value="membrane protein insertion efficiency factor YidD"/>
    <property type="match status" value="1"/>
</dbReference>
<dbReference type="PANTHER" id="PTHR33383">
    <property type="entry name" value="MEMBRANE PROTEIN INSERTION EFFICIENCY FACTOR-RELATED"/>
    <property type="match status" value="1"/>
</dbReference>
<dbReference type="PANTHER" id="PTHR33383:SF1">
    <property type="entry name" value="MEMBRANE PROTEIN INSERTION EFFICIENCY FACTOR-RELATED"/>
    <property type="match status" value="1"/>
</dbReference>
<dbReference type="Pfam" id="PF01809">
    <property type="entry name" value="YidD"/>
    <property type="match status" value="1"/>
</dbReference>
<dbReference type="SMART" id="SM01234">
    <property type="entry name" value="Haemolytic"/>
    <property type="match status" value="1"/>
</dbReference>
<organism>
    <name type="scientific">Pseudomonas putida (strain ATCC 700007 / DSM 6899 / JCM 31910 / BCRC 17059 / LMG 24140 / F1)</name>
    <dbReference type="NCBI Taxonomy" id="351746"/>
    <lineage>
        <taxon>Bacteria</taxon>
        <taxon>Pseudomonadati</taxon>
        <taxon>Pseudomonadota</taxon>
        <taxon>Gammaproteobacteria</taxon>
        <taxon>Pseudomonadales</taxon>
        <taxon>Pseudomonadaceae</taxon>
        <taxon>Pseudomonas</taxon>
    </lineage>
</organism>
<feature type="chain" id="PRO_1000060727" description="Putative membrane protein insertion efficiency factor">
    <location>
        <begin position="1"/>
        <end position="81"/>
    </location>
</feature>
<feature type="region of interest" description="Disordered" evidence="2">
    <location>
        <begin position="61"/>
        <end position="81"/>
    </location>
</feature>
<accession>A5WBB8</accession>
<name>YIDD_PSEP1</name>